<accession>Q8VHI4</accession>
<accession>B2RRZ9</accession>
<comment type="function">
    <text evidence="1">Acts as a transcriptional activator that mediates the calcium- and neuron-selective induction of BDNF exon III transcription. Binds to the consensus calcium-response element CaRE1 5'-CTATTTCGAG-3' sequence (By similarity).</text>
</comment>
<comment type="subcellular location">
    <subcellularLocation>
        <location evidence="3">Nucleus</location>
    </subcellularLocation>
</comment>
<comment type="tissue specificity">
    <text evidence="3">Highly expressed in brain and testis.</text>
</comment>
<comment type="domain">
    <text>The N-terminus is necessary for DNA-binding. The C-terminus is necessary for transcriptional activation.</text>
</comment>
<protein>
    <recommendedName>
        <fullName>Calcium-responsive transcription factor</fullName>
    </recommendedName>
    <alternativeName>
        <fullName>Amyotrophic lateral sclerosis 2 chromosomal region candidate gene 8 protein</fullName>
    </alternativeName>
    <alternativeName>
        <fullName>Calcium-response factor</fullName>
        <shortName>CaRF</shortName>
    </alternativeName>
</protein>
<reference key="1">
    <citation type="journal article" date="2002" name="Neuron">
        <title>A calcium-responsive transcription factor, CaRF, that regulates neuronal activity-dependent expression of BDNF.</title>
        <authorList>
            <person name="Tao X."/>
            <person name="West A.E."/>
            <person name="Chen W.G."/>
            <person name="Corfas G."/>
            <person name="Greenberg M.E."/>
        </authorList>
    </citation>
    <scope>NUCLEOTIDE SEQUENCE [MRNA]</scope>
    <scope>SUBCELLULAR LOCATION</scope>
    <scope>TISSUE SPECIFICITY</scope>
    <source>
        <strain>C57BL/6J</strain>
    </source>
</reference>
<reference key="2">
    <citation type="journal article" date="2004" name="Genome Res.">
        <title>The status, quality, and expansion of the NIH full-length cDNA project: the Mammalian Gene Collection (MGC).</title>
        <authorList>
            <consortium name="The MGC Project Team"/>
        </authorList>
    </citation>
    <scope>NUCLEOTIDE SEQUENCE [LARGE SCALE MRNA]</scope>
    <source>
        <tissue>Brain</tissue>
    </source>
</reference>
<name>CARTF_MOUSE</name>
<dbReference type="EMBL" id="AF454947">
    <property type="protein sequence ID" value="AAL62331.1"/>
    <property type="molecule type" value="mRNA"/>
</dbReference>
<dbReference type="EMBL" id="BC138644">
    <property type="protein sequence ID" value="AAI38645.1"/>
    <property type="molecule type" value="mRNA"/>
</dbReference>
<dbReference type="EMBL" id="BC138645">
    <property type="protein sequence ID" value="AAI38646.1"/>
    <property type="molecule type" value="mRNA"/>
</dbReference>
<dbReference type="CCDS" id="CCDS14989.1"/>
<dbReference type="RefSeq" id="NP_001272402.1">
    <property type="nucleotide sequence ID" value="NM_001285473.1"/>
</dbReference>
<dbReference type="RefSeq" id="NP_631889.1">
    <property type="nucleotide sequence ID" value="NM_139150.6"/>
</dbReference>
<dbReference type="RefSeq" id="XP_011236812.1">
    <property type="nucleotide sequence ID" value="XM_011238510.1"/>
</dbReference>
<dbReference type="RefSeq" id="XP_017176083.1">
    <property type="nucleotide sequence ID" value="XM_017320594.1"/>
</dbReference>
<dbReference type="RefSeq" id="XP_030109944.1">
    <property type="nucleotide sequence ID" value="XM_030254084.1"/>
</dbReference>
<dbReference type="RefSeq" id="XP_036020840.1">
    <property type="nucleotide sequence ID" value="XM_036164947.1"/>
</dbReference>
<dbReference type="SMR" id="Q8VHI4"/>
<dbReference type="BioGRID" id="232270">
    <property type="interactions" value="1"/>
</dbReference>
<dbReference type="FunCoup" id="Q8VHI4">
    <property type="interactions" value="2308"/>
</dbReference>
<dbReference type="IntAct" id="Q8VHI4">
    <property type="interactions" value="1"/>
</dbReference>
<dbReference type="STRING" id="10090.ENSMUSP00000141169"/>
<dbReference type="iPTMnet" id="Q8VHI4"/>
<dbReference type="PhosphoSitePlus" id="Q8VHI4"/>
<dbReference type="PaxDb" id="10090-ENSMUSP00000141169"/>
<dbReference type="ProteomicsDB" id="265531"/>
<dbReference type="Antibodypedia" id="34159">
    <property type="antibodies" value="198 antibodies from 28 providers"/>
</dbReference>
<dbReference type="DNASU" id="241066"/>
<dbReference type="Ensembl" id="ENSMUST00000180952.8">
    <property type="protein sequence ID" value="ENSMUSP00000137825.2"/>
    <property type="gene ID" value="ENSMUSG00000026017.14"/>
</dbReference>
<dbReference type="Ensembl" id="ENSMUST00000187978.7">
    <property type="protein sequence ID" value="ENSMUSP00000141169.2"/>
    <property type="gene ID" value="ENSMUSG00000026017.14"/>
</dbReference>
<dbReference type="GeneID" id="241066"/>
<dbReference type="KEGG" id="mmu:241066"/>
<dbReference type="UCSC" id="uc007beh.2">
    <property type="organism name" value="mouse"/>
</dbReference>
<dbReference type="AGR" id="MGI:2182269"/>
<dbReference type="CTD" id="79800"/>
<dbReference type="MGI" id="MGI:2182269">
    <property type="gene designation" value="Carf"/>
</dbReference>
<dbReference type="VEuPathDB" id="HostDB:ENSMUSG00000026017"/>
<dbReference type="eggNOG" id="ENOG502QWYS">
    <property type="taxonomic scope" value="Eukaryota"/>
</dbReference>
<dbReference type="GeneTree" id="ENSGT00390000013916"/>
<dbReference type="InParanoid" id="Q8VHI4"/>
<dbReference type="OMA" id="MMIVTSQ"/>
<dbReference type="OrthoDB" id="2668416at2759"/>
<dbReference type="PhylomeDB" id="Q8VHI4"/>
<dbReference type="TreeFam" id="TF333279"/>
<dbReference type="BioGRID-ORCS" id="241066">
    <property type="hits" value="3 hits in 80 CRISPR screens"/>
</dbReference>
<dbReference type="ChiTaRS" id="Carf">
    <property type="organism name" value="mouse"/>
</dbReference>
<dbReference type="PRO" id="PR:Q8VHI4"/>
<dbReference type="Proteomes" id="UP000000589">
    <property type="component" value="Chromosome 1"/>
</dbReference>
<dbReference type="RNAct" id="Q8VHI4">
    <property type="molecule type" value="protein"/>
</dbReference>
<dbReference type="Bgee" id="ENSMUSG00000026017">
    <property type="expression patterns" value="Expressed in spermatocyte and 215 other cell types or tissues"/>
</dbReference>
<dbReference type="ExpressionAtlas" id="Q8VHI4">
    <property type="expression patterns" value="baseline and differential"/>
</dbReference>
<dbReference type="GO" id="GO:0001652">
    <property type="term" value="C:granular component"/>
    <property type="evidence" value="ECO:0000314"/>
    <property type="project" value="MGI"/>
</dbReference>
<dbReference type="GO" id="GO:0005634">
    <property type="term" value="C:nucleus"/>
    <property type="evidence" value="ECO:0000314"/>
    <property type="project" value="UniProtKB"/>
</dbReference>
<dbReference type="GO" id="GO:0003677">
    <property type="term" value="F:DNA binding"/>
    <property type="evidence" value="ECO:0000250"/>
    <property type="project" value="UniProtKB"/>
</dbReference>
<dbReference type="GO" id="GO:0001228">
    <property type="term" value="F:DNA-binding transcription activator activity, RNA polymerase II-specific"/>
    <property type="evidence" value="ECO:0000314"/>
    <property type="project" value="NTNU_SB"/>
</dbReference>
<dbReference type="GO" id="GO:0000978">
    <property type="term" value="F:RNA polymerase II cis-regulatory region sequence-specific DNA binding"/>
    <property type="evidence" value="ECO:0000314"/>
    <property type="project" value="NTNU_SB"/>
</dbReference>
<dbReference type="GO" id="GO:0071277">
    <property type="term" value="P:cellular response to calcium ion"/>
    <property type="evidence" value="ECO:0000250"/>
    <property type="project" value="UniProtKB"/>
</dbReference>
<dbReference type="GO" id="GO:0045944">
    <property type="term" value="P:positive regulation of transcription by RNA polymerase II"/>
    <property type="evidence" value="ECO:0000314"/>
    <property type="project" value="NTNU_SB"/>
</dbReference>
<dbReference type="InterPro" id="IPR029309">
    <property type="entry name" value="CaRF"/>
</dbReference>
<dbReference type="PANTHER" id="PTHR14694">
    <property type="entry name" value="CALCIUM-RESPONSIVE TRANSCRIPTION FACTOR"/>
    <property type="match status" value="1"/>
</dbReference>
<dbReference type="PANTHER" id="PTHR14694:SF1">
    <property type="entry name" value="CALCIUM-RESPONSIVE TRANSCRIPTION FACTOR"/>
    <property type="match status" value="1"/>
</dbReference>
<dbReference type="Pfam" id="PF15299">
    <property type="entry name" value="ALS2CR8"/>
    <property type="match status" value="1"/>
</dbReference>
<keyword id="KW-0010">Activator</keyword>
<keyword id="KW-0238">DNA-binding</keyword>
<keyword id="KW-0539">Nucleus</keyword>
<keyword id="KW-1185">Reference proteome</keyword>
<keyword id="KW-0804">Transcription</keyword>
<keyword id="KW-0805">Transcription regulation</keyword>
<evidence type="ECO:0000250" key="1"/>
<evidence type="ECO:0000256" key="2">
    <source>
        <dbReference type="SAM" id="MobiDB-lite"/>
    </source>
</evidence>
<evidence type="ECO:0000269" key="3">
    <source>
    </source>
</evidence>
<organism>
    <name type="scientific">Mus musculus</name>
    <name type="common">Mouse</name>
    <dbReference type="NCBI Taxonomy" id="10090"/>
    <lineage>
        <taxon>Eukaryota</taxon>
        <taxon>Metazoa</taxon>
        <taxon>Chordata</taxon>
        <taxon>Craniata</taxon>
        <taxon>Vertebrata</taxon>
        <taxon>Euteleostomi</taxon>
        <taxon>Mammalia</taxon>
        <taxon>Eutheria</taxon>
        <taxon>Euarchontoglires</taxon>
        <taxon>Glires</taxon>
        <taxon>Rodentia</taxon>
        <taxon>Myomorpha</taxon>
        <taxon>Muroidea</taxon>
        <taxon>Muridae</taxon>
        <taxon>Murinae</taxon>
        <taxon>Mus</taxon>
        <taxon>Mus</taxon>
    </lineage>
</organism>
<feature type="chain" id="PRO_0000076173" description="Calcium-responsive transcription factor">
    <location>
        <begin position="1"/>
        <end position="689"/>
    </location>
</feature>
<feature type="region of interest" description="Disordered" evidence="2">
    <location>
        <begin position="1"/>
        <end position="46"/>
    </location>
</feature>
<feature type="region of interest" description="Disordered" evidence="2">
    <location>
        <begin position="541"/>
        <end position="609"/>
    </location>
</feature>
<feature type="compositionally biased region" description="Basic and acidic residues" evidence="2">
    <location>
        <begin position="13"/>
        <end position="29"/>
    </location>
</feature>
<feature type="compositionally biased region" description="Polar residues" evidence="2">
    <location>
        <begin position="541"/>
        <end position="559"/>
    </location>
</feature>
<feature type="compositionally biased region" description="Polar residues" evidence="2">
    <location>
        <begin position="578"/>
        <end position="601"/>
    </location>
</feature>
<proteinExistence type="evidence at transcript level"/>
<sequence length="689" mass="76397">MEQRHSLAGNCDDGEKSEREAQGFEHRTCMDSGDPSFGQNDPPTILPITAPKTYDSLTSQDMPETLTDTQALHEEQFHLLDQNGQPIQYDLQSLGNSTAQMTGMEQVAIPQEPFADEHSPQDISEEKPTGVRADVLEDSTSNYGLRSPASLVLPKKAGARLVEEPLLAPLQPLSCNTPMWACRLRSCEKIGDSYRGYCVSETELESVLTFHKQQTQTVWGTRQSPSPAKPATRLMWKSQYVPYDGIPFVNAGSRAVVMECQYGPRRKGFQLKKISEQESRSCHLYKATCPARIYIKKVQKFPEYRVPTDPQIDRKIIRLEQEKAFTMLKKNLMDAGGVLRWYVQLPTQQAHQYHESETPGVPLSPSPFPMSPLEEEEAIVRDENCALPSRLHPQVAHKIQELVSQGVGQVYAVRKQLRKFVERELFKPDEIPERHNLSYFPTVNDIKNHIHEVQKSLRTGDVVYNSEIIPATLQWTTDSGNILRETVTVTFAEGNLLGEPIPSKMGTSQTQTAVSPEPLSSFPPKIFTHFQALKLQPRLSSPDGSQALVSVDSHASSSPPGLVDTVGNAEVDNHSVLLGQSQNPGTDTCLTQDNSTSSSTGHLPESVPNPVAEDQLLEGEDVEDAGNPEGSVNRTLLGDVQTVPIQIIDSRPVLVEESLSKNQVKQETNEPTLSTEAKTFLDCKKISAT</sequence>
<gene>
    <name type="primary">Carf</name>
    <name type="synonym">Als2cr8</name>
</gene>